<organism>
    <name type="scientific">Rhodospirillum centenum (strain ATCC 51521 / SW)</name>
    <dbReference type="NCBI Taxonomy" id="414684"/>
    <lineage>
        <taxon>Bacteria</taxon>
        <taxon>Pseudomonadati</taxon>
        <taxon>Pseudomonadota</taxon>
        <taxon>Alphaproteobacteria</taxon>
        <taxon>Rhodospirillales</taxon>
        <taxon>Rhodospirillaceae</taxon>
        <taxon>Rhodospirillum</taxon>
    </lineage>
</organism>
<evidence type="ECO:0000255" key="1">
    <source>
        <dbReference type="HAMAP-Rule" id="MF_01077"/>
    </source>
</evidence>
<evidence type="ECO:0000256" key="2">
    <source>
        <dbReference type="SAM" id="MobiDB-lite"/>
    </source>
</evidence>
<feature type="chain" id="PRO_0000384749" description="Ribosome maturation factor RimP">
    <location>
        <begin position="1"/>
        <end position="252"/>
    </location>
</feature>
<feature type="region of interest" description="Disordered" evidence="2">
    <location>
        <begin position="188"/>
        <end position="252"/>
    </location>
</feature>
<feature type="compositionally biased region" description="Basic residues" evidence="2">
    <location>
        <begin position="208"/>
        <end position="224"/>
    </location>
</feature>
<accession>B6IVF3</accession>
<dbReference type="EMBL" id="CP000613">
    <property type="protein sequence ID" value="ACJ00277.1"/>
    <property type="molecule type" value="Genomic_DNA"/>
</dbReference>
<dbReference type="RefSeq" id="WP_012568057.1">
    <property type="nucleotide sequence ID" value="NC_011420.2"/>
</dbReference>
<dbReference type="SMR" id="B6IVF3"/>
<dbReference type="STRING" id="414684.RC1_2909"/>
<dbReference type="KEGG" id="rce:RC1_2909"/>
<dbReference type="eggNOG" id="COG0779">
    <property type="taxonomic scope" value="Bacteria"/>
</dbReference>
<dbReference type="HOGENOM" id="CLU_070525_0_0_5"/>
<dbReference type="OrthoDB" id="9805006at2"/>
<dbReference type="Proteomes" id="UP000001591">
    <property type="component" value="Chromosome"/>
</dbReference>
<dbReference type="GO" id="GO:0005829">
    <property type="term" value="C:cytosol"/>
    <property type="evidence" value="ECO:0007669"/>
    <property type="project" value="TreeGrafter"/>
</dbReference>
<dbReference type="GO" id="GO:0000028">
    <property type="term" value="P:ribosomal small subunit assembly"/>
    <property type="evidence" value="ECO:0007669"/>
    <property type="project" value="TreeGrafter"/>
</dbReference>
<dbReference type="GO" id="GO:0006412">
    <property type="term" value="P:translation"/>
    <property type="evidence" value="ECO:0007669"/>
    <property type="project" value="TreeGrafter"/>
</dbReference>
<dbReference type="CDD" id="cd01734">
    <property type="entry name" value="YlxS_C"/>
    <property type="match status" value="1"/>
</dbReference>
<dbReference type="FunFam" id="3.30.300.70:FF:000001">
    <property type="entry name" value="Ribosome maturation factor RimP"/>
    <property type="match status" value="1"/>
</dbReference>
<dbReference type="Gene3D" id="2.30.30.180">
    <property type="entry name" value="Ribosome maturation factor RimP, C-terminal domain"/>
    <property type="match status" value="1"/>
</dbReference>
<dbReference type="Gene3D" id="3.30.300.70">
    <property type="entry name" value="RimP-like superfamily, N-terminal"/>
    <property type="match status" value="1"/>
</dbReference>
<dbReference type="HAMAP" id="MF_01077">
    <property type="entry name" value="RimP"/>
    <property type="match status" value="1"/>
</dbReference>
<dbReference type="InterPro" id="IPR003728">
    <property type="entry name" value="Ribosome_maturation_RimP"/>
</dbReference>
<dbReference type="InterPro" id="IPR028998">
    <property type="entry name" value="RimP_C"/>
</dbReference>
<dbReference type="InterPro" id="IPR036847">
    <property type="entry name" value="RimP_C_sf"/>
</dbReference>
<dbReference type="InterPro" id="IPR028989">
    <property type="entry name" value="RimP_N"/>
</dbReference>
<dbReference type="InterPro" id="IPR035956">
    <property type="entry name" value="RimP_N_sf"/>
</dbReference>
<dbReference type="NCBIfam" id="NF000932">
    <property type="entry name" value="PRK00092.2-5"/>
    <property type="match status" value="1"/>
</dbReference>
<dbReference type="PANTHER" id="PTHR33867">
    <property type="entry name" value="RIBOSOME MATURATION FACTOR RIMP"/>
    <property type="match status" value="1"/>
</dbReference>
<dbReference type="PANTHER" id="PTHR33867:SF1">
    <property type="entry name" value="RIBOSOME MATURATION FACTOR RIMP"/>
    <property type="match status" value="1"/>
</dbReference>
<dbReference type="Pfam" id="PF17384">
    <property type="entry name" value="DUF150_C"/>
    <property type="match status" value="1"/>
</dbReference>
<dbReference type="Pfam" id="PF02576">
    <property type="entry name" value="RimP_N"/>
    <property type="match status" value="1"/>
</dbReference>
<dbReference type="SUPFAM" id="SSF74942">
    <property type="entry name" value="YhbC-like, C-terminal domain"/>
    <property type="match status" value="1"/>
</dbReference>
<dbReference type="SUPFAM" id="SSF75420">
    <property type="entry name" value="YhbC-like, N-terminal domain"/>
    <property type="match status" value="1"/>
</dbReference>
<keyword id="KW-0963">Cytoplasm</keyword>
<keyword id="KW-1185">Reference proteome</keyword>
<keyword id="KW-0690">Ribosome biogenesis</keyword>
<comment type="function">
    <text evidence="1">Required for maturation of 30S ribosomal subunits.</text>
</comment>
<comment type="subcellular location">
    <subcellularLocation>
        <location evidence="1">Cytoplasm</location>
    </subcellularLocation>
</comment>
<comment type="similarity">
    <text evidence="1">Belongs to the RimP family.</text>
</comment>
<sequence length="252" mass="26422">MEAVERIGRIIEPSVEAMGYELVRVQLSGGQRPTLQIMAERSDGAAMTVEDCADISRAVSALLDVEDPLPGAYTLEVSSPGIDRPLTRLKDFERFAGFEARLETKAPVDGRKRFRGFLAGIEDDAVRLALPVEKKARKGAKAAPTRDAADAGEAGDAEATLVVIPFGLVLKAKLELTDELLTAAAAEQGAAPGTEGGAMEVEEDARPARRPHQPKPKKAKKKGPGRFSKAGAGEDVDGADGGPAAGPGAQDE</sequence>
<gene>
    <name evidence="1" type="primary">rimP</name>
    <name type="ordered locus">RC1_2909</name>
</gene>
<protein>
    <recommendedName>
        <fullName evidence="1">Ribosome maturation factor RimP</fullName>
    </recommendedName>
</protein>
<proteinExistence type="inferred from homology"/>
<name>RIMP_RHOCS</name>
<reference key="1">
    <citation type="submission" date="2007-03" db="EMBL/GenBank/DDBJ databases">
        <title>Genome sequence of Rhodospirillum centenum.</title>
        <authorList>
            <person name="Touchman J.W."/>
            <person name="Bauer C."/>
            <person name="Blankenship R.E."/>
        </authorList>
    </citation>
    <scope>NUCLEOTIDE SEQUENCE [LARGE SCALE GENOMIC DNA]</scope>
    <source>
        <strain>ATCC 51521 / SW</strain>
    </source>
</reference>